<sequence length="243" mass="27583">MTIYLTELSPETLTFPSPFTALDDPNGLLAFGGDLRPERIWAAYQQGIFPWYGPEDPILWWSPSPRAVFDPTRFQPAKSVKKFQRKHQYRVSVNHATSQVIEQCALTRPADQRWLNDSMRHAYGELAKQGRCHSVEVWQGEQLVGGLYGISVGQLFCGESMFSLATNASKIALWYFCDHFSRHQGQLIDCQVMNPHLQSLGATTLSREQFIQSLLSFKEKQVLSGCFETQWLATPTSPCAFED</sequence>
<dbReference type="EC" id="2.3.2.6" evidence="1"/>
<dbReference type="EMBL" id="CP000627">
    <property type="protein sequence ID" value="ABQ20703.1"/>
    <property type="molecule type" value="Genomic_DNA"/>
</dbReference>
<dbReference type="EMBL" id="CP001235">
    <property type="protein sequence ID" value="ACP09848.1"/>
    <property type="molecule type" value="Genomic_DNA"/>
</dbReference>
<dbReference type="RefSeq" id="WP_000158369.1">
    <property type="nucleotide sequence ID" value="NZ_JAACZH010000016.1"/>
</dbReference>
<dbReference type="SMR" id="A5F7F1"/>
<dbReference type="KEGG" id="vco:VC0395_A1336"/>
<dbReference type="KEGG" id="vcr:VC395_1851"/>
<dbReference type="PATRIC" id="fig|345073.21.peg.1793"/>
<dbReference type="eggNOG" id="COG2360">
    <property type="taxonomic scope" value="Bacteria"/>
</dbReference>
<dbReference type="HOGENOM" id="CLU_075045_0_0_6"/>
<dbReference type="OrthoDB" id="9790282at2"/>
<dbReference type="Proteomes" id="UP000000249">
    <property type="component" value="Chromosome 2"/>
</dbReference>
<dbReference type="GO" id="GO:0005737">
    <property type="term" value="C:cytoplasm"/>
    <property type="evidence" value="ECO:0007669"/>
    <property type="project" value="UniProtKB-SubCell"/>
</dbReference>
<dbReference type="GO" id="GO:0008914">
    <property type="term" value="F:leucyl-tRNA--protein transferase activity"/>
    <property type="evidence" value="ECO:0007669"/>
    <property type="project" value="UniProtKB-UniRule"/>
</dbReference>
<dbReference type="GO" id="GO:0030163">
    <property type="term" value="P:protein catabolic process"/>
    <property type="evidence" value="ECO:0007669"/>
    <property type="project" value="UniProtKB-UniRule"/>
</dbReference>
<dbReference type="FunFam" id="3.30.70.3550:FF:000001">
    <property type="entry name" value="Leucyl/phenylalanyl-tRNA--protein transferase"/>
    <property type="match status" value="1"/>
</dbReference>
<dbReference type="FunFam" id="3.40.630.70:FF:000005">
    <property type="entry name" value="Leucyl/phenylalanyl-tRNA--protein transferase"/>
    <property type="match status" value="1"/>
</dbReference>
<dbReference type="Gene3D" id="3.40.630.70">
    <property type="entry name" value="Leucyl/phenylalanyl-tRNA-protein transferase, C-terminal domain"/>
    <property type="match status" value="1"/>
</dbReference>
<dbReference type="Gene3D" id="3.30.70.3550">
    <property type="entry name" value="Leucyl/phenylalanyl-tRNA-protein transferase, N-terminal domain"/>
    <property type="match status" value="1"/>
</dbReference>
<dbReference type="HAMAP" id="MF_00688">
    <property type="entry name" value="Leu_Phe_trans"/>
    <property type="match status" value="1"/>
</dbReference>
<dbReference type="InterPro" id="IPR016181">
    <property type="entry name" value="Acyl_CoA_acyltransferase"/>
</dbReference>
<dbReference type="InterPro" id="IPR004616">
    <property type="entry name" value="Leu/Phe-tRNA_Trfase"/>
</dbReference>
<dbReference type="InterPro" id="IPR042203">
    <property type="entry name" value="Leu/Phe-tRNA_Trfase_C"/>
</dbReference>
<dbReference type="InterPro" id="IPR042221">
    <property type="entry name" value="Leu/Phe-tRNA_Trfase_N"/>
</dbReference>
<dbReference type="NCBIfam" id="TIGR00667">
    <property type="entry name" value="aat"/>
    <property type="match status" value="1"/>
</dbReference>
<dbReference type="PANTHER" id="PTHR30098">
    <property type="entry name" value="LEUCYL/PHENYLALANYL-TRNA--PROTEIN TRANSFERASE"/>
    <property type="match status" value="1"/>
</dbReference>
<dbReference type="PANTHER" id="PTHR30098:SF2">
    <property type="entry name" value="LEUCYL_PHENYLALANYL-TRNA--PROTEIN TRANSFERASE"/>
    <property type="match status" value="1"/>
</dbReference>
<dbReference type="Pfam" id="PF03588">
    <property type="entry name" value="Leu_Phe_trans"/>
    <property type="match status" value="1"/>
</dbReference>
<dbReference type="SUPFAM" id="SSF55729">
    <property type="entry name" value="Acyl-CoA N-acyltransferases (Nat)"/>
    <property type="match status" value="1"/>
</dbReference>
<protein>
    <recommendedName>
        <fullName evidence="1">Leucyl/phenylalanyl-tRNA--protein transferase</fullName>
        <ecNumber evidence="1">2.3.2.6</ecNumber>
    </recommendedName>
    <alternativeName>
        <fullName evidence="1">L/F-transferase</fullName>
    </alternativeName>
    <alternativeName>
        <fullName evidence="1">Leucyltransferase</fullName>
    </alternativeName>
    <alternativeName>
        <fullName evidence="1">Phenyalanyltransferase</fullName>
    </alternativeName>
</protein>
<proteinExistence type="inferred from homology"/>
<name>LFTR_VIBC3</name>
<feature type="chain" id="PRO_1000072739" description="Leucyl/phenylalanyl-tRNA--protein transferase">
    <location>
        <begin position="1"/>
        <end position="243"/>
    </location>
</feature>
<keyword id="KW-0012">Acyltransferase</keyword>
<keyword id="KW-0963">Cytoplasm</keyword>
<keyword id="KW-0808">Transferase</keyword>
<comment type="function">
    <text evidence="1">Functions in the N-end rule pathway of protein degradation where it conjugates Leu, Phe and, less efficiently, Met from aminoacyl-tRNAs to the N-termini of proteins containing an N-terminal arginine or lysine.</text>
</comment>
<comment type="catalytic activity">
    <reaction evidence="1">
        <text>N-terminal L-lysyl-[protein] + L-leucyl-tRNA(Leu) = N-terminal L-leucyl-L-lysyl-[protein] + tRNA(Leu) + H(+)</text>
        <dbReference type="Rhea" id="RHEA:12340"/>
        <dbReference type="Rhea" id="RHEA-COMP:9613"/>
        <dbReference type="Rhea" id="RHEA-COMP:9622"/>
        <dbReference type="Rhea" id="RHEA-COMP:12670"/>
        <dbReference type="Rhea" id="RHEA-COMP:12671"/>
        <dbReference type="ChEBI" id="CHEBI:15378"/>
        <dbReference type="ChEBI" id="CHEBI:65249"/>
        <dbReference type="ChEBI" id="CHEBI:78442"/>
        <dbReference type="ChEBI" id="CHEBI:78494"/>
        <dbReference type="ChEBI" id="CHEBI:133043"/>
        <dbReference type="EC" id="2.3.2.6"/>
    </reaction>
</comment>
<comment type="catalytic activity">
    <reaction evidence="1">
        <text>N-terminal L-arginyl-[protein] + L-leucyl-tRNA(Leu) = N-terminal L-leucyl-L-arginyl-[protein] + tRNA(Leu) + H(+)</text>
        <dbReference type="Rhea" id="RHEA:50416"/>
        <dbReference type="Rhea" id="RHEA-COMP:9613"/>
        <dbReference type="Rhea" id="RHEA-COMP:9622"/>
        <dbReference type="Rhea" id="RHEA-COMP:12672"/>
        <dbReference type="Rhea" id="RHEA-COMP:12673"/>
        <dbReference type="ChEBI" id="CHEBI:15378"/>
        <dbReference type="ChEBI" id="CHEBI:64719"/>
        <dbReference type="ChEBI" id="CHEBI:78442"/>
        <dbReference type="ChEBI" id="CHEBI:78494"/>
        <dbReference type="ChEBI" id="CHEBI:133044"/>
        <dbReference type="EC" id="2.3.2.6"/>
    </reaction>
</comment>
<comment type="catalytic activity">
    <reaction evidence="1">
        <text>L-phenylalanyl-tRNA(Phe) + an N-terminal L-alpha-aminoacyl-[protein] = an N-terminal L-phenylalanyl-L-alpha-aminoacyl-[protein] + tRNA(Phe)</text>
        <dbReference type="Rhea" id="RHEA:43632"/>
        <dbReference type="Rhea" id="RHEA-COMP:9668"/>
        <dbReference type="Rhea" id="RHEA-COMP:9699"/>
        <dbReference type="Rhea" id="RHEA-COMP:10636"/>
        <dbReference type="Rhea" id="RHEA-COMP:10637"/>
        <dbReference type="ChEBI" id="CHEBI:78442"/>
        <dbReference type="ChEBI" id="CHEBI:78531"/>
        <dbReference type="ChEBI" id="CHEBI:78597"/>
        <dbReference type="ChEBI" id="CHEBI:83561"/>
        <dbReference type="EC" id="2.3.2.6"/>
    </reaction>
</comment>
<comment type="subcellular location">
    <subcellularLocation>
        <location evidence="1">Cytoplasm</location>
    </subcellularLocation>
</comment>
<comment type="similarity">
    <text evidence="1">Belongs to the L/F-transferase family.</text>
</comment>
<accession>A5F7F1</accession>
<accession>C3M1D2</accession>
<gene>
    <name evidence="1" type="primary">aat</name>
    <name type="ordered locus">VC0395_A1336</name>
    <name type="ordered locus">VC395_1851</name>
</gene>
<reference key="1">
    <citation type="submission" date="2007-03" db="EMBL/GenBank/DDBJ databases">
        <authorList>
            <person name="Heidelberg J."/>
        </authorList>
    </citation>
    <scope>NUCLEOTIDE SEQUENCE [LARGE SCALE GENOMIC DNA]</scope>
    <source>
        <strain>ATCC 39541 / Classical Ogawa 395 / O395</strain>
    </source>
</reference>
<reference key="2">
    <citation type="journal article" date="2008" name="PLoS ONE">
        <title>A recalibrated molecular clock and independent origins for the cholera pandemic clones.</title>
        <authorList>
            <person name="Feng L."/>
            <person name="Reeves P.R."/>
            <person name="Lan R."/>
            <person name="Ren Y."/>
            <person name="Gao C."/>
            <person name="Zhou Z."/>
            <person name="Ren Y."/>
            <person name="Cheng J."/>
            <person name="Wang W."/>
            <person name="Wang J."/>
            <person name="Qian W."/>
            <person name="Li D."/>
            <person name="Wang L."/>
        </authorList>
    </citation>
    <scope>NUCLEOTIDE SEQUENCE [LARGE SCALE GENOMIC DNA]</scope>
    <source>
        <strain>ATCC 39541 / Classical Ogawa 395 / O395</strain>
    </source>
</reference>
<organism>
    <name type="scientific">Vibrio cholerae serotype O1 (strain ATCC 39541 / Classical Ogawa 395 / O395)</name>
    <dbReference type="NCBI Taxonomy" id="345073"/>
    <lineage>
        <taxon>Bacteria</taxon>
        <taxon>Pseudomonadati</taxon>
        <taxon>Pseudomonadota</taxon>
        <taxon>Gammaproteobacteria</taxon>
        <taxon>Vibrionales</taxon>
        <taxon>Vibrionaceae</taxon>
        <taxon>Vibrio</taxon>
    </lineage>
</organism>
<evidence type="ECO:0000255" key="1">
    <source>
        <dbReference type="HAMAP-Rule" id="MF_00688"/>
    </source>
</evidence>